<sequence length="427" mass="47579">MSSIVVVGTQWGDEGKGKITDFLAEQSDVIARFSGGNNAGHTIQFGGETYKLHLVPSGIFYKDKLAVIGNGVVVDPVALLKELDGLNERGIPTSNLRISNRAQVILPYHLAQDEYEERLRGDNKIGTTKKGIGPAYVDKVQRIGIRMADLLEKETFERLLKSNIEYKQAYFKGMFNETCPSFDDIFEEYYAAGQRLKEFVTDTSKILDDAFVADEKVLFEGAQGVMLDIDHGTYPFVTSSNPIAGNVTVGTGVGPTFVSKVIGVCKAYTSRVGDGPFPTELFDEDGHHIREVGREYGTTTGRPRRVGWFDSVVLRHSRRVSGITDLSINSIDVLTGLDTVKICTAYELDGKEITEYPANLDQLKRCKPIFEELPGWTEDVTNVRTLEELPENARKYLERISELCNVQISIFSVGPDREQTNLLKELW</sequence>
<organism>
    <name type="scientific">Staphylococcus aureus (strain MSSA476)</name>
    <dbReference type="NCBI Taxonomy" id="282459"/>
    <lineage>
        <taxon>Bacteria</taxon>
        <taxon>Bacillati</taxon>
        <taxon>Bacillota</taxon>
        <taxon>Bacilli</taxon>
        <taxon>Bacillales</taxon>
        <taxon>Staphylococcaceae</taxon>
        <taxon>Staphylococcus</taxon>
    </lineage>
</organism>
<evidence type="ECO:0000255" key="1">
    <source>
        <dbReference type="HAMAP-Rule" id="MF_00011"/>
    </source>
</evidence>
<accession>Q6GD73</accession>
<reference key="1">
    <citation type="journal article" date="2004" name="Proc. Natl. Acad. Sci. U.S.A.">
        <title>Complete genomes of two clinical Staphylococcus aureus strains: evidence for the rapid evolution of virulence and drug resistance.</title>
        <authorList>
            <person name="Holden M.T.G."/>
            <person name="Feil E.J."/>
            <person name="Lindsay J.A."/>
            <person name="Peacock S.J."/>
            <person name="Day N.P.J."/>
            <person name="Enright M.C."/>
            <person name="Foster T.J."/>
            <person name="Moore C.E."/>
            <person name="Hurst L."/>
            <person name="Atkin R."/>
            <person name="Barron A."/>
            <person name="Bason N."/>
            <person name="Bentley S.D."/>
            <person name="Chillingworth C."/>
            <person name="Chillingworth T."/>
            <person name="Churcher C."/>
            <person name="Clark L."/>
            <person name="Corton C."/>
            <person name="Cronin A."/>
            <person name="Doggett J."/>
            <person name="Dowd L."/>
            <person name="Feltwell T."/>
            <person name="Hance Z."/>
            <person name="Harris B."/>
            <person name="Hauser H."/>
            <person name="Holroyd S."/>
            <person name="Jagels K."/>
            <person name="James K.D."/>
            <person name="Lennard N."/>
            <person name="Line A."/>
            <person name="Mayes R."/>
            <person name="Moule S."/>
            <person name="Mungall K."/>
            <person name="Ormond D."/>
            <person name="Quail M.A."/>
            <person name="Rabbinowitsch E."/>
            <person name="Rutherford K.M."/>
            <person name="Sanders M."/>
            <person name="Sharp S."/>
            <person name="Simmonds M."/>
            <person name="Stevens K."/>
            <person name="Whitehead S."/>
            <person name="Barrell B.G."/>
            <person name="Spratt B.G."/>
            <person name="Parkhill J."/>
        </authorList>
    </citation>
    <scope>NUCLEOTIDE SEQUENCE [LARGE SCALE GENOMIC DNA]</scope>
    <source>
        <strain>MSSA476</strain>
    </source>
</reference>
<proteinExistence type="inferred from homology"/>
<name>PURA_STAAS</name>
<dbReference type="EC" id="6.3.4.4" evidence="1"/>
<dbReference type="EMBL" id="BX571857">
    <property type="protein sequence ID" value="CAG41789.1"/>
    <property type="molecule type" value="Genomic_DNA"/>
</dbReference>
<dbReference type="RefSeq" id="WP_000095327.1">
    <property type="nucleotide sequence ID" value="NC_002953.3"/>
</dbReference>
<dbReference type="SMR" id="Q6GD73"/>
<dbReference type="KEGG" id="sas:SAS0017"/>
<dbReference type="HOGENOM" id="CLU_029848_0_0_9"/>
<dbReference type="UniPathway" id="UPA00075">
    <property type="reaction ID" value="UER00335"/>
</dbReference>
<dbReference type="GO" id="GO:0005737">
    <property type="term" value="C:cytoplasm"/>
    <property type="evidence" value="ECO:0007669"/>
    <property type="project" value="UniProtKB-SubCell"/>
</dbReference>
<dbReference type="GO" id="GO:0004019">
    <property type="term" value="F:adenylosuccinate synthase activity"/>
    <property type="evidence" value="ECO:0007669"/>
    <property type="project" value="UniProtKB-UniRule"/>
</dbReference>
<dbReference type="GO" id="GO:0005525">
    <property type="term" value="F:GTP binding"/>
    <property type="evidence" value="ECO:0007669"/>
    <property type="project" value="UniProtKB-UniRule"/>
</dbReference>
<dbReference type="GO" id="GO:0000287">
    <property type="term" value="F:magnesium ion binding"/>
    <property type="evidence" value="ECO:0007669"/>
    <property type="project" value="UniProtKB-UniRule"/>
</dbReference>
<dbReference type="GO" id="GO:0044208">
    <property type="term" value="P:'de novo' AMP biosynthetic process"/>
    <property type="evidence" value="ECO:0007669"/>
    <property type="project" value="UniProtKB-UniRule"/>
</dbReference>
<dbReference type="GO" id="GO:0046040">
    <property type="term" value="P:IMP metabolic process"/>
    <property type="evidence" value="ECO:0007669"/>
    <property type="project" value="TreeGrafter"/>
</dbReference>
<dbReference type="CDD" id="cd03108">
    <property type="entry name" value="AdSS"/>
    <property type="match status" value="1"/>
</dbReference>
<dbReference type="FunFam" id="1.10.300.10:FF:000001">
    <property type="entry name" value="Adenylosuccinate synthetase"/>
    <property type="match status" value="1"/>
</dbReference>
<dbReference type="FunFam" id="3.90.170.10:FF:000001">
    <property type="entry name" value="Adenylosuccinate synthetase"/>
    <property type="match status" value="1"/>
</dbReference>
<dbReference type="Gene3D" id="3.40.440.10">
    <property type="entry name" value="Adenylosuccinate Synthetase, subunit A, domain 1"/>
    <property type="match status" value="1"/>
</dbReference>
<dbReference type="Gene3D" id="1.10.300.10">
    <property type="entry name" value="Adenylosuccinate Synthetase, subunit A, domain 2"/>
    <property type="match status" value="1"/>
</dbReference>
<dbReference type="Gene3D" id="3.90.170.10">
    <property type="entry name" value="Adenylosuccinate Synthetase, subunit A, domain 3"/>
    <property type="match status" value="1"/>
</dbReference>
<dbReference type="HAMAP" id="MF_00011">
    <property type="entry name" value="Adenylosucc_synth"/>
    <property type="match status" value="1"/>
</dbReference>
<dbReference type="InterPro" id="IPR018220">
    <property type="entry name" value="Adenylosuccin_syn_GTP-bd"/>
</dbReference>
<dbReference type="InterPro" id="IPR033128">
    <property type="entry name" value="Adenylosuccin_syn_Lys_AS"/>
</dbReference>
<dbReference type="InterPro" id="IPR042109">
    <property type="entry name" value="Adenylosuccinate_synth_dom1"/>
</dbReference>
<dbReference type="InterPro" id="IPR042110">
    <property type="entry name" value="Adenylosuccinate_synth_dom2"/>
</dbReference>
<dbReference type="InterPro" id="IPR042111">
    <property type="entry name" value="Adenylosuccinate_synth_dom3"/>
</dbReference>
<dbReference type="InterPro" id="IPR001114">
    <property type="entry name" value="Adenylosuccinate_synthetase"/>
</dbReference>
<dbReference type="InterPro" id="IPR027417">
    <property type="entry name" value="P-loop_NTPase"/>
</dbReference>
<dbReference type="NCBIfam" id="NF002223">
    <property type="entry name" value="PRK01117.1"/>
    <property type="match status" value="1"/>
</dbReference>
<dbReference type="NCBIfam" id="TIGR00184">
    <property type="entry name" value="purA"/>
    <property type="match status" value="1"/>
</dbReference>
<dbReference type="PANTHER" id="PTHR11846">
    <property type="entry name" value="ADENYLOSUCCINATE SYNTHETASE"/>
    <property type="match status" value="1"/>
</dbReference>
<dbReference type="PANTHER" id="PTHR11846:SF0">
    <property type="entry name" value="ADENYLOSUCCINATE SYNTHETASE"/>
    <property type="match status" value="1"/>
</dbReference>
<dbReference type="Pfam" id="PF00709">
    <property type="entry name" value="Adenylsucc_synt"/>
    <property type="match status" value="1"/>
</dbReference>
<dbReference type="SMART" id="SM00788">
    <property type="entry name" value="Adenylsucc_synt"/>
    <property type="match status" value="1"/>
</dbReference>
<dbReference type="SUPFAM" id="SSF52540">
    <property type="entry name" value="P-loop containing nucleoside triphosphate hydrolases"/>
    <property type="match status" value="1"/>
</dbReference>
<dbReference type="PROSITE" id="PS01266">
    <property type="entry name" value="ADENYLOSUCCIN_SYN_1"/>
    <property type="match status" value="1"/>
</dbReference>
<dbReference type="PROSITE" id="PS00513">
    <property type="entry name" value="ADENYLOSUCCIN_SYN_2"/>
    <property type="match status" value="1"/>
</dbReference>
<keyword id="KW-0963">Cytoplasm</keyword>
<keyword id="KW-0342">GTP-binding</keyword>
<keyword id="KW-0436">Ligase</keyword>
<keyword id="KW-0460">Magnesium</keyword>
<keyword id="KW-0479">Metal-binding</keyword>
<keyword id="KW-0547">Nucleotide-binding</keyword>
<keyword id="KW-0658">Purine biosynthesis</keyword>
<feature type="chain" id="PRO_0000095230" description="Adenylosuccinate synthetase">
    <location>
        <begin position="1"/>
        <end position="427"/>
    </location>
</feature>
<feature type="active site" description="Proton acceptor" evidence="1">
    <location>
        <position position="13"/>
    </location>
</feature>
<feature type="active site" description="Proton donor" evidence="1">
    <location>
        <position position="41"/>
    </location>
</feature>
<feature type="binding site" evidence="1">
    <location>
        <begin position="12"/>
        <end position="18"/>
    </location>
    <ligand>
        <name>GTP</name>
        <dbReference type="ChEBI" id="CHEBI:37565"/>
    </ligand>
</feature>
<feature type="binding site" description="in other chain" evidence="1">
    <location>
        <begin position="13"/>
        <end position="16"/>
    </location>
    <ligand>
        <name>IMP</name>
        <dbReference type="ChEBI" id="CHEBI:58053"/>
        <note>ligand shared between dimeric partners</note>
    </ligand>
</feature>
<feature type="binding site" evidence="1">
    <location>
        <position position="13"/>
    </location>
    <ligand>
        <name>Mg(2+)</name>
        <dbReference type="ChEBI" id="CHEBI:18420"/>
    </ligand>
</feature>
<feature type="binding site" description="in other chain" evidence="1">
    <location>
        <begin position="38"/>
        <end position="41"/>
    </location>
    <ligand>
        <name>IMP</name>
        <dbReference type="ChEBI" id="CHEBI:58053"/>
        <note>ligand shared between dimeric partners</note>
    </ligand>
</feature>
<feature type="binding site" evidence="1">
    <location>
        <begin position="40"/>
        <end position="42"/>
    </location>
    <ligand>
        <name>GTP</name>
        <dbReference type="ChEBI" id="CHEBI:37565"/>
    </ligand>
</feature>
<feature type="binding site" evidence="1">
    <location>
        <position position="40"/>
    </location>
    <ligand>
        <name>Mg(2+)</name>
        <dbReference type="ChEBI" id="CHEBI:18420"/>
    </ligand>
</feature>
<feature type="binding site" description="in other chain" evidence="1">
    <location>
        <position position="128"/>
    </location>
    <ligand>
        <name>IMP</name>
        <dbReference type="ChEBI" id="CHEBI:58053"/>
        <note>ligand shared between dimeric partners</note>
    </ligand>
</feature>
<feature type="binding site" evidence="1">
    <location>
        <position position="142"/>
    </location>
    <ligand>
        <name>IMP</name>
        <dbReference type="ChEBI" id="CHEBI:58053"/>
        <note>ligand shared between dimeric partners</note>
    </ligand>
</feature>
<feature type="binding site" description="in other chain" evidence="1">
    <location>
        <position position="223"/>
    </location>
    <ligand>
        <name>IMP</name>
        <dbReference type="ChEBI" id="CHEBI:58053"/>
        <note>ligand shared between dimeric partners</note>
    </ligand>
</feature>
<feature type="binding site" description="in other chain" evidence="1">
    <location>
        <position position="238"/>
    </location>
    <ligand>
        <name>IMP</name>
        <dbReference type="ChEBI" id="CHEBI:58053"/>
        <note>ligand shared between dimeric partners</note>
    </ligand>
</feature>
<feature type="binding site" evidence="1">
    <location>
        <begin position="298"/>
        <end position="304"/>
    </location>
    <ligand>
        <name>substrate</name>
    </ligand>
</feature>
<feature type="binding site" description="in other chain" evidence="1">
    <location>
        <position position="302"/>
    </location>
    <ligand>
        <name>IMP</name>
        <dbReference type="ChEBI" id="CHEBI:58053"/>
        <note>ligand shared between dimeric partners</note>
    </ligand>
</feature>
<feature type="binding site" evidence="1">
    <location>
        <position position="304"/>
    </location>
    <ligand>
        <name>GTP</name>
        <dbReference type="ChEBI" id="CHEBI:37565"/>
    </ligand>
</feature>
<feature type="binding site" evidence="1">
    <location>
        <begin position="330"/>
        <end position="332"/>
    </location>
    <ligand>
        <name>GTP</name>
        <dbReference type="ChEBI" id="CHEBI:37565"/>
    </ligand>
</feature>
<feature type="binding site" evidence="1">
    <location>
        <begin position="412"/>
        <end position="414"/>
    </location>
    <ligand>
        <name>GTP</name>
        <dbReference type="ChEBI" id="CHEBI:37565"/>
    </ligand>
</feature>
<gene>
    <name evidence="1" type="primary">purA</name>
    <name type="ordered locus">SAS0017</name>
</gene>
<comment type="function">
    <text evidence="1">Plays an important role in the de novo pathway of purine nucleotide biosynthesis. Catalyzes the first committed step in the biosynthesis of AMP from IMP.</text>
</comment>
<comment type="catalytic activity">
    <reaction evidence="1">
        <text>IMP + L-aspartate + GTP = N(6)-(1,2-dicarboxyethyl)-AMP + GDP + phosphate + 2 H(+)</text>
        <dbReference type="Rhea" id="RHEA:15753"/>
        <dbReference type="ChEBI" id="CHEBI:15378"/>
        <dbReference type="ChEBI" id="CHEBI:29991"/>
        <dbReference type="ChEBI" id="CHEBI:37565"/>
        <dbReference type="ChEBI" id="CHEBI:43474"/>
        <dbReference type="ChEBI" id="CHEBI:57567"/>
        <dbReference type="ChEBI" id="CHEBI:58053"/>
        <dbReference type="ChEBI" id="CHEBI:58189"/>
        <dbReference type="EC" id="6.3.4.4"/>
    </reaction>
</comment>
<comment type="cofactor">
    <cofactor evidence="1">
        <name>Mg(2+)</name>
        <dbReference type="ChEBI" id="CHEBI:18420"/>
    </cofactor>
    <text evidence="1">Binds 1 Mg(2+) ion per subunit.</text>
</comment>
<comment type="pathway">
    <text evidence="1">Purine metabolism; AMP biosynthesis via de novo pathway; AMP from IMP: step 1/2.</text>
</comment>
<comment type="subunit">
    <text evidence="1">Homodimer.</text>
</comment>
<comment type="subcellular location">
    <subcellularLocation>
        <location evidence="1">Cytoplasm</location>
    </subcellularLocation>
</comment>
<comment type="similarity">
    <text evidence="1">Belongs to the adenylosuccinate synthetase family.</text>
</comment>
<protein>
    <recommendedName>
        <fullName evidence="1">Adenylosuccinate synthetase</fullName>
        <shortName evidence="1">AMPSase</shortName>
        <shortName evidence="1">AdSS</shortName>
        <ecNumber evidence="1">6.3.4.4</ecNumber>
    </recommendedName>
    <alternativeName>
        <fullName evidence="1">IMP--aspartate ligase</fullName>
    </alternativeName>
</protein>